<feature type="initiator methionine" description="Removed; by host" evidence="1">
    <location>
        <position position="1"/>
    </location>
</feature>
<feature type="chain" id="PRO_0000449070" description="Genome polyprotein">
    <location>
        <begin position="2"/>
        <end position="2193"/>
    </location>
</feature>
<feature type="chain" id="PRO_0000449071" description="P1">
    <location>
        <begin position="2"/>
        <end position="862"/>
    </location>
</feature>
<feature type="chain" id="PRO_0000449072" description="Capsid protein VP0">
    <location>
        <begin position="2"/>
        <end position="323"/>
    </location>
</feature>
<feature type="chain" id="PRO_0000449073" description="Capsid protein VP4">
    <location>
        <begin position="2"/>
        <end position="69"/>
    </location>
</feature>
<feature type="chain" id="PRO_0000449074" description="Capsid protein VP2">
    <location>
        <begin position="70"/>
        <end position="323"/>
    </location>
</feature>
<feature type="chain" id="PRO_0000449075" description="Capsid protein VP3">
    <location>
        <begin position="324"/>
        <end position="565"/>
    </location>
</feature>
<feature type="chain" id="PRO_0000449076" description="Capsid protein VP1">
    <location>
        <begin position="566"/>
        <end position="862"/>
    </location>
</feature>
<feature type="chain" id="PRO_0000449077" description="P2">
    <location>
        <begin position="863"/>
        <end position="1440"/>
    </location>
</feature>
<feature type="chain" id="PRO_0000449078" description="Protease 2A">
    <location>
        <begin position="863"/>
        <end position="1012"/>
    </location>
</feature>
<feature type="chain" id="PRO_0000449079" description="Protein 2B">
    <location>
        <begin position="1013"/>
        <end position="1111"/>
    </location>
</feature>
<feature type="chain" id="PRO_0000449080" description="Protein 2C">
    <location>
        <begin position="1112"/>
        <end position="1440"/>
    </location>
</feature>
<feature type="chain" id="PRO_0000449081" description="P3">
    <location>
        <begin position="1441"/>
        <end position="2193"/>
    </location>
</feature>
<feature type="chain" id="PRO_0000449082" description="Protein 3AB">
    <location>
        <begin position="1441"/>
        <end position="1548"/>
    </location>
</feature>
<feature type="chain" id="PRO_0000449083" description="Protein 3A">
    <location>
        <begin position="1441"/>
        <end position="1526"/>
    </location>
</feature>
<feature type="chain" id="PRO_0000449084" description="Viral protein genome-linked">
    <location>
        <begin position="1527"/>
        <end position="1548"/>
    </location>
</feature>
<feature type="chain" id="PRO_0000449085" description="Protein 3CD">
    <location>
        <begin position="1549"/>
        <end position="2193"/>
    </location>
</feature>
<feature type="chain" id="PRO_0000449086" description="Protease 3C">
    <location>
        <begin position="1549"/>
        <end position="1731"/>
    </location>
</feature>
<feature type="chain" id="PRO_0000449087" description="RNA-directed RNA polymerase">
    <location>
        <begin position="1732"/>
        <end position="2193"/>
    </location>
</feature>
<feature type="topological domain" description="Cytoplasmic" evidence="8">
    <location>
        <begin position="2"/>
        <end position="1503"/>
    </location>
</feature>
<feature type="intramembrane region" evidence="8">
    <location>
        <begin position="1504"/>
        <end position="1519"/>
    </location>
</feature>
<feature type="topological domain" description="Cytoplasmic" evidence="8">
    <location>
        <begin position="1520"/>
        <end position="2193"/>
    </location>
</feature>
<feature type="domain" description="SF3 helicase" evidence="10">
    <location>
        <begin position="1216"/>
        <end position="1374"/>
    </location>
</feature>
<feature type="domain" description="Peptidase C3" evidence="11">
    <location>
        <begin position="1549"/>
        <end position="1727"/>
    </location>
</feature>
<feature type="domain" description="RdRp catalytic" evidence="9">
    <location>
        <begin position="1958"/>
        <end position="2073"/>
    </location>
</feature>
<feature type="zinc finger region" description="C4-type; degenerate" evidence="14">
    <location>
        <begin position="1381"/>
        <end position="1397"/>
    </location>
</feature>
<feature type="region of interest" description="Disordered" evidence="12">
    <location>
        <begin position="1"/>
        <end position="22"/>
    </location>
</feature>
<feature type="region of interest" description="Amphipathic alpha-helix" evidence="8">
    <location>
        <begin position="566"/>
        <end position="588"/>
    </location>
</feature>
<feature type="region of interest" description="Amphipathic alpha-helix" evidence="8">
    <location>
        <begin position="568"/>
        <end position="588"/>
    </location>
</feature>
<feature type="region of interest" description="Oligomerization" evidence="1">
    <location>
        <begin position="1112"/>
        <end position="1250"/>
    </location>
</feature>
<feature type="region of interest" description="Membrane-binding" evidence="1">
    <location>
        <begin position="1112"/>
        <end position="1184"/>
    </location>
</feature>
<feature type="region of interest" description="RNA-binding" evidence="1">
    <location>
        <begin position="1133"/>
        <end position="1137"/>
    </location>
</feature>
<feature type="region of interest" description="RNA-binding" evidence="1">
    <location>
        <begin position="1424"/>
        <end position="1431"/>
    </location>
</feature>
<feature type="region of interest" description="Oligomerization" evidence="1">
    <location>
        <begin position="1435"/>
        <end position="1440"/>
    </location>
</feature>
<feature type="active site" description="For protease 2A activity" evidence="1">
    <location>
        <position position="883"/>
    </location>
</feature>
<feature type="active site" description="For protease 2A activity" evidence="1">
    <location>
        <position position="901"/>
    </location>
</feature>
<feature type="active site" description="For protease 2A activity" evidence="1">
    <location>
        <position position="972"/>
    </location>
</feature>
<feature type="active site" description="For protease 3C activity" evidence="11">
    <location>
        <position position="1588"/>
    </location>
</feature>
<feature type="active site" description="For protease 3C activity" evidence="11">
    <location>
        <position position="1619"/>
    </location>
</feature>
<feature type="active site" description="For protease 3C activity" evidence="11">
    <location>
        <position position="1695"/>
    </location>
</feature>
<feature type="binding site" evidence="7">
    <location>
        <position position="918"/>
    </location>
    <ligand>
        <name>Zn(2+)</name>
        <dbReference type="ChEBI" id="CHEBI:29105"/>
        <label>1</label>
        <note>structural</note>
    </ligand>
</feature>
<feature type="binding site" evidence="7">
    <location>
        <position position="920"/>
    </location>
    <ligand>
        <name>Zn(2+)</name>
        <dbReference type="ChEBI" id="CHEBI:29105"/>
        <label>1</label>
        <note>structural</note>
    </ligand>
</feature>
<feature type="binding site" evidence="7">
    <location>
        <position position="978"/>
    </location>
    <ligand>
        <name>Zn(2+)</name>
        <dbReference type="ChEBI" id="CHEBI:29105"/>
        <label>1</label>
        <note>structural</note>
    </ligand>
</feature>
<feature type="binding site" evidence="7">
    <location>
        <position position="980"/>
    </location>
    <ligand>
        <name>Zn(2+)</name>
        <dbReference type="ChEBI" id="CHEBI:29105"/>
        <label>1</label>
        <note>structural</note>
    </ligand>
</feature>
<feature type="binding site" evidence="10">
    <location>
        <begin position="1240"/>
        <end position="1247"/>
    </location>
    <ligand>
        <name>ATP</name>
        <dbReference type="ChEBI" id="CHEBI:30616"/>
    </ligand>
</feature>
<feature type="binding site" evidence="14">
    <location>
        <position position="1381"/>
    </location>
    <ligand>
        <name>Zn(2+)</name>
        <dbReference type="ChEBI" id="CHEBI:29105"/>
        <label>2</label>
    </ligand>
</feature>
<feature type="binding site" evidence="14">
    <location>
        <position position="1392"/>
    </location>
    <ligand>
        <name>Zn(2+)</name>
        <dbReference type="ChEBI" id="CHEBI:29105"/>
        <label>2</label>
    </ligand>
</feature>
<feature type="binding site" evidence="14">
    <location>
        <position position="1393"/>
    </location>
    <ligand>
        <name>Zn(2+)</name>
        <dbReference type="ChEBI" id="CHEBI:29105"/>
        <label>2</label>
    </ligand>
</feature>
<feature type="binding site" evidence="14">
    <location>
        <position position="1397"/>
    </location>
    <ligand>
        <name>Zn(2+)</name>
        <dbReference type="ChEBI" id="CHEBI:29105"/>
        <label>2</label>
    </ligand>
</feature>
<feature type="binding site" evidence="1">
    <location>
        <position position="1964"/>
    </location>
    <ligand>
        <name>Mg(2+)</name>
        <dbReference type="ChEBI" id="CHEBI:18420"/>
        <label>1</label>
        <note>catalytic; for RdRp activity</note>
    </ligand>
</feature>
<feature type="binding site" evidence="1">
    <location>
        <position position="1964"/>
    </location>
    <ligand>
        <name>Mg(2+)</name>
        <dbReference type="ChEBI" id="CHEBI:18420"/>
        <label>2</label>
        <note>catalytic; for RdRp activity</note>
    </ligand>
</feature>
<feature type="binding site" evidence="1">
    <location>
        <position position="2060"/>
    </location>
    <ligand>
        <name>Mg(2+)</name>
        <dbReference type="ChEBI" id="CHEBI:18420"/>
        <label>1</label>
        <note>catalytic; for RdRp activity</note>
    </ligand>
</feature>
<feature type="binding site" evidence="1">
    <location>
        <position position="2060"/>
    </location>
    <ligand>
        <name>Mg(2+)</name>
        <dbReference type="ChEBI" id="CHEBI:18420"/>
        <label>2</label>
        <note>catalytic; for RdRp activity</note>
    </ligand>
</feature>
<feature type="site" description="Cleavage; by autolysis" evidence="5">
    <location>
        <begin position="69"/>
        <end position="70"/>
    </location>
</feature>
<feature type="site" description="Cleavage; by protease 3C" evidence="2">
    <location>
        <begin position="323"/>
        <end position="324"/>
    </location>
</feature>
<feature type="site" description="Cleavage; by autolysis" evidence="2">
    <location>
        <begin position="862"/>
        <end position="863"/>
    </location>
</feature>
<feature type="site" description="Cleavage; by protease 3C" evidence="2">
    <location>
        <begin position="1012"/>
        <end position="1013"/>
    </location>
</feature>
<feature type="site" description="Cleavage; by protease 3C" evidence="2">
    <location>
        <begin position="1111"/>
        <end position="1112"/>
    </location>
</feature>
<feature type="site" description="Cleavage; by protease 3C" evidence="2">
    <location>
        <begin position="1440"/>
        <end position="1441"/>
    </location>
</feature>
<feature type="site" description="Cleavage; by protease 3C" evidence="2">
    <location>
        <begin position="1526"/>
        <end position="1527"/>
    </location>
</feature>
<feature type="site" description="Cleavage; by protease 3C" evidence="2">
    <location>
        <begin position="1548"/>
        <end position="1549"/>
    </location>
</feature>
<feature type="site" description="Cleavage; by protease 3C" evidence="2">
    <location>
        <begin position="1731"/>
        <end position="1732"/>
    </location>
</feature>
<feature type="modified residue" description="O-(5'-phospho-RNA)-tyrosine" evidence="1">
    <location>
        <position position="1529"/>
    </location>
</feature>
<feature type="lipid moiety-binding region" description="N-myristoyl glycine; by host" evidence="1">
    <location>
        <position position="2"/>
    </location>
</feature>
<feature type="mutagenesis site" description="85% loss of protein 2C ATPase activity and complete loss of virion production." evidence="14">
    <original>K</original>
    <variation>A</variation>
    <location>
        <position position="1246"/>
    </location>
</feature>
<feature type="mutagenesis site" description="90% loss of protein 2C ATPase activity and complete loss of virion production." evidence="14">
    <original>I</original>
    <variation>R</variation>
    <location>
        <position position="1252"/>
    </location>
</feature>
<feature type="mutagenesis site" description="Complete loss of virion production." evidence="14">
    <original>D</original>
    <variation>N</variation>
    <location>
        <position position="1287"/>
    </location>
</feature>
<feature type="mutagenesis site" description="Complete loss of virion production." evidence="14">
    <original>C</original>
    <variation>A</variation>
    <location>
        <position position="1381"/>
    </location>
</feature>
<feature type="mutagenesis site" description="75% loss of protein 2C ATPase activity." evidence="13">
    <original>E</original>
    <variation>C</variation>
    <location>
        <position position="1383"/>
    </location>
</feature>
<feature type="mutagenesis site" description="75% loss of protein 2C ATPase activity." evidence="13">
    <original>E</original>
    <variation>H</variation>
    <location>
        <position position="1383"/>
    </location>
</feature>
<feature type="mutagenesis site" description="70% loss of protein 2C ATPase activity and 80% loss of virion production." evidence="14">
    <original>N</original>
    <variation>A</variation>
    <location>
        <position position="1384"/>
    </location>
</feature>
<feature type="mutagenesis site" description="No effect on protein 2C ATPase activity and increased virion production." evidence="14">
    <original>N</original>
    <variation>A</variation>
    <location>
        <position position="1385"/>
    </location>
</feature>
<feature type="mutagenesis site" description="Complete loss of virion production." evidence="14">
    <original>C</original>
    <variation>A</variation>
    <location>
        <position position="1392"/>
    </location>
</feature>
<feature type="mutagenesis site" description="50% loss of protein 2C ATPase activity and increased virion production." evidence="14">
    <original>S</original>
    <variation>A</variation>
    <location>
        <position position="1393"/>
    </location>
</feature>
<feature type="mutagenesis site" description="90% loss of protein 2C ATPase activity and complete loss of virion production." evidence="14">
    <original>S</original>
    <variation>R</variation>
    <location>
        <position position="1393"/>
    </location>
</feature>
<feature type="mutagenesis site" description="50% loss of protein 2C ATPase activity and 70% loss of virion production." evidence="14">
    <original>P</original>
    <variation>A</variation>
    <location>
        <position position="1394"/>
    </location>
</feature>
<feature type="mutagenesis site" description="Complete loss of virion production." evidence="14">
    <original>C</original>
    <variation>A</variation>
    <location>
        <position position="1397"/>
    </location>
</feature>
<feature type="mutagenesis site" description="50% loss of protein 2C ATPase activity and 95% loss of virion production." evidence="14">
    <original>K</original>
    <variation>A</variation>
    <location>
        <position position="1399"/>
    </location>
</feature>
<feature type="mutagenesis site" description="70% loss of protein 2C ATPase activity and complete loss of virion production." evidence="14">
    <original>E</original>
    <variation>A</variation>
    <location>
        <position position="1436"/>
    </location>
</feature>
<feature type="mutagenesis site" description="90% loss of protein 2C ATPase activity and complete loss of virion production." evidence="14">
    <original>L</original>
    <variation>K</variation>
    <location>
        <position position="1438"/>
    </location>
</feature>
<feature type="mutagenesis site" description="95% loss of protein 2C ATPase activity and complete loss of virion production." evidence="14">
    <original>F</original>
    <variation>A</variation>
    <variation>R</variation>
    <location>
        <position position="1439"/>
    </location>
</feature>
<feature type="mutagenesis site" description="85% loss of protein 2C ATPase activity and complete loss of virion production." evidence="14">
    <original>F</original>
    <variation>Y</variation>
    <location>
        <position position="1439"/>
    </location>
</feature>
<feature type="strand" evidence="20">
    <location>
        <begin position="1234"/>
        <end position="1239"/>
    </location>
</feature>
<feature type="helix" evidence="20">
    <location>
        <begin position="1246"/>
        <end position="1260"/>
    </location>
</feature>
<feature type="strand" evidence="20">
    <location>
        <begin position="1265"/>
        <end position="1268"/>
    </location>
</feature>
<feature type="strand" evidence="20">
    <location>
        <begin position="1282"/>
        <end position="1286"/>
    </location>
</feature>
<feature type="turn" evidence="20">
    <location>
        <begin position="1287"/>
        <end position="1290"/>
    </location>
</feature>
<feature type="strand" evidence="20">
    <location>
        <begin position="1292"/>
        <end position="1295"/>
    </location>
</feature>
<feature type="helix" evidence="20">
    <location>
        <begin position="1296"/>
        <end position="1304"/>
    </location>
</feature>
<feature type="strand" evidence="20">
    <location>
        <begin position="1305"/>
        <end position="1308"/>
    </location>
</feature>
<feature type="helix" evidence="20">
    <location>
        <begin position="1317"/>
        <end position="1319"/>
    </location>
</feature>
<feature type="strand" evidence="20">
    <location>
        <begin position="1327"/>
        <end position="1333"/>
    </location>
</feature>
<feature type="helix" evidence="20">
    <location>
        <begin position="1346"/>
        <end position="1352"/>
    </location>
</feature>
<feature type="strand" evidence="20">
    <location>
        <begin position="1353"/>
        <end position="1361"/>
    </location>
</feature>
<feature type="strand" evidence="20">
    <location>
        <begin position="1363"/>
        <end position="1367"/>
    </location>
</feature>
<feature type="turn" evidence="20">
    <location>
        <begin position="1368"/>
        <end position="1370"/>
    </location>
</feature>
<feature type="helix" evidence="20">
    <location>
        <begin position="1374"/>
        <end position="1377"/>
    </location>
</feature>
<feature type="turn" evidence="20">
    <location>
        <begin position="1394"/>
        <end position="1396"/>
    </location>
</feature>
<feature type="strand" evidence="20">
    <location>
        <begin position="1397"/>
        <end position="1405"/>
    </location>
</feature>
<feature type="turn" evidence="20">
    <location>
        <begin position="1406"/>
        <end position="1408"/>
    </location>
</feature>
<feature type="helix" evidence="20">
    <location>
        <begin position="1414"/>
        <end position="1435"/>
    </location>
</feature>
<evidence type="ECO:0000250" key="1">
    <source>
        <dbReference type="UniProtKB" id="P03300"/>
    </source>
</evidence>
<evidence type="ECO:0000250" key="2">
    <source>
        <dbReference type="UniProtKB" id="P03301"/>
    </source>
</evidence>
<evidence type="ECO:0000250" key="3">
    <source>
        <dbReference type="UniProtKB" id="P03303"/>
    </source>
</evidence>
<evidence type="ECO:0000250" key="4">
    <source>
        <dbReference type="UniProtKB" id="P03313"/>
    </source>
</evidence>
<evidence type="ECO:0000250" key="5">
    <source>
        <dbReference type="UniProtKB" id="Q66478"/>
    </source>
</evidence>
<evidence type="ECO:0000250" key="6">
    <source>
        <dbReference type="UniProtKB" id="Q66479"/>
    </source>
</evidence>
<evidence type="ECO:0000250" key="7">
    <source>
        <dbReference type="UniProtKB" id="Q9QF31"/>
    </source>
</evidence>
<evidence type="ECO:0000255" key="8"/>
<evidence type="ECO:0000255" key="9">
    <source>
        <dbReference type="PROSITE-ProRule" id="PRU00539"/>
    </source>
</evidence>
<evidence type="ECO:0000255" key="10">
    <source>
        <dbReference type="PROSITE-ProRule" id="PRU00551"/>
    </source>
</evidence>
<evidence type="ECO:0000255" key="11">
    <source>
        <dbReference type="PROSITE-ProRule" id="PRU01222"/>
    </source>
</evidence>
<evidence type="ECO:0000256" key="12">
    <source>
        <dbReference type="SAM" id="MobiDB-lite"/>
    </source>
</evidence>
<evidence type="ECO:0000269" key="13">
    <source>
    </source>
</evidence>
<evidence type="ECO:0000269" key="14">
    <source ref="2"/>
</evidence>
<evidence type="ECO:0000305" key="15"/>
<evidence type="ECO:0000305" key="16">
    <source ref="2"/>
</evidence>
<evidence type="ECO:0000312" key="17">
    <source>
        <dbReference type="EMBL" id="ACM62759.1"/>
    </source>
</evidence>
<evidence type="ECO:0007744" key="18">
    <source>
        <dbReference type="PDB" id="5GQ1"/>
    </source>
</evidence>
<evidence type="ECO:0007744" key="19">
    <source>
        <dbReference type="PDB" id="5GRB"/>
    </source>
</evidence>
<evidence type="ECO:0007829" key="20">
    <source>
        <dbReference type="PDB" id="5GQ1"/>
    </source>
</evidence>
<protein>
    <recommendedName>
        <fullName>Genome polyprotein</fullName>
    </recommendedName>
    <component>
        <recommendedName>
            <fullName>P1</fullName>
        </recommendedName>
    </component>
    <component>
        <recommendedName>
            <fullName>Capsid protein VP0</fullName>
        </recommendedName>
        <alternativeName>
            <fullName>VP4-VP2</fullName>
        </alternativeName>
    </component>
    <component>
        <recommendedName>
            <fullName>Capsid protein VP4</fullName>
        </recommendedName>
        <alternativeName>
            <fullName>P1A</fullName>
        </alternativeName>
        <alternativeName>
            <fullName>Virion protein 4</fullName>
        </alternativeName>
    </component>
    <component>
        <recommendedName>
            <fullName>Capsid protein VP2</fullName>
        </recommendedName>
        <alternativeName>
            <fullName>P1B</fullName>
        </alternativeName>
        <alternativeName>
            <fullName>Virion protein 2</fullName>
        </alternativeName>
    </component>
    <component>
        <recommendedName>
            <fullName>Capsid protein VP3</fullName>
        </recommendedName>
        <alternativeName>
            <fullName>P1C</fullName>
        </alternativeName>
        <alternativeName>
            <fullName>Virion protein 3</fullName>
        </alternativeName>
    </component>
    <component>
        <recommendedName>
            <fullName>Capsid protein VP1</fullName>
        </recommendedName>
        <alternativeName>
            <fullName>P1D</fullName>
        </alternativeName>
        <alternativeName>
            <fullName>Virion protein 1</fullName>
        </alternativeName>
    </component>
    <component>
        <recommendedName>
            <fullName>P2</fullName>
        </recommendedName>
    </component>
    <component>
        <recommendedName>
            <fullName>Protease 2A</fullName>
            <shortName>P2A</shortName>
            <ecNumber evidence="1">3.4.22.29</ecNumber>
        </recommendedName>
        <alternativeName>
            <fullName>Picornain 2A</fullName>
        </alternativeName>
        <alternativeName>
            <fullName>Protein 2A</fullName>
        </alternativeName>
    </component>
    <component>
        <recommendedName>
            <fullName>Protein 2B</fullName>
            <shortName>P2B</shortName>
        </recommendedName>
    </component>
    <component>
        <recommendedName>
            <fullName>Protein 2C</fullName>
            <shortName>P2C</shortName>
            <ecNumber evidence="1">3.6.1.15</ecNumber>
        </recommendedName>
    </component>
    <component>
        <recommendedName>
            <fullName>P3</fullName>
        </recommendedName>
    </component>
    <component>
        <recommendedName>
            <fullName>Protein 3AB</fullName>
        </recommendedName>
    </component>
    <component>
        <recommendedName>
            <fullName>Protein 3A</fullName>
            <shortName>P3A</shortName>
        </recommendedName>
    </component>
    <component>
        <recommendedName>
            <fullName>Viral protein genome-linked</fullName>
            <shortName>VPg</shortName>
        </recommendedName>
        <alternativeName>
            <fullName>Protein 3B</fullName>
            <shortName>P3B</shortName>
        </alternativeName>
    </component>
    <component>
        <recommendedName>
            <fullName>Protein 3CD</fullName>
            <ecNumber>3.4.22.28</ecNumber>
        </recommendedName>
    </component>
    <component>
        <recommendedName>
            <fullName evidence="11">Protease 3C</fullName>
            <ecNumber evidence="11">3.4.22.28</ecNumber>
        </recommendedName>
        <alternativeName>
            <fullName evidence="11">Picornain 3C</fullName>
            <shortName evidence="11">P3C</shortName>
        </alternativeName>
    </component>
    <component>
        <recommendedName>
            <fullName evidence="9">RNA-directed RNA polymerase</fullName>
            <shortName>RdRp</shortName>
            <ecNumber evidence="9">2.7.7.48</ecNumber>
        </recommendedName>
        <alternativeName>
            <fullName>3D polymerase</fullName>
            <shortName>3Dpol</shortName>
        </alternativeName>
        <alternativeName>
            <fullName>Protein 3D</fullName>
            <shortName>3D</shortName>
        </alternativeName>
    </component>
</protein>
<organismHost>
    <name type="scientific">Homo sapiens</name>
    <name type="common">Human</name>
    <dbReference type="NCBI Taxonomy" id="9606"/>
</organismHost>
<reference key="1">
    <citation type="journal article" date="2009" name="Virus Res.">
        <title>Appearance of mosaic enterovirus 71 in the 2008 outbreak of China.</title>
        <authorList>
            <person name="Ding N.Z."/>
            <person name="Wang X.M."/>
            <person name="Sun S.W."/>
            <person name="Song Q."/>
            <person name="Li S.N."/>
            <person name="He C.Q."/>
        </authorList>
    </citation>
    <scope>NUCLEOTIDE SEQUENCE [LARGE SCALE GENOMIC DNA]</scope>
    <source>
        <strain evidence="17">BJ08-Z025-5</strain>
    </source>
</reference>
<reference evidence="18 19" key="2">
    <citation type="journal article" date="2017" name="Sci. Adv.">
        <title>Crystal structure of 2C helicase from enterovirus 71.</title>
        <authorList>
            <person name="Guan H.X."/>
            <person name="Tian J."/>
            <person name="Qin B."/>
            <person name="Wojdyla J."/>
            <person name="Wang B."/>
            <person name="Zhao Z.D."/>
            <person name="Wang M.T."/>
            <person name="Cui S."/>
        </authorList>
    </citation>
    <scope>X-RAY CRYSTALLOGRAPHY (2.49 ANGSTROMS) OF 1227-1440 IN COMPLEX WITH ZINC</scope>
    <scope>ZINC-FINGER (PROTEIN 2C)</scope>
    <scope>DOMAIN (PROTEIN 2C)</scope>
    <scope>SUBUNIT (PROTEIN 2C)</scope>
    <scope>MUTAGENESIS OF LYS-1246; ILE-1252; ASP-1287; CYS-1381; ASN-1384; ASN-1385; CYS-1392; SER-1393; PRO-1394; CYS-1397; LYS-1399; GLU-1436; LEU-1438 AND PHE-1439</scope>
</reference>
<reference key="3">
    <citation type="journal article" date="2018" name="PLoS Pathog.">
        <title>Crystal structure of a soluble fragment of poliovirus 2CATPase.</title>
        <authorList>
            <person name="Guan H."/>
            <person name="Tian J."/>
            <person name="Zhang C."/>
            <person name="Qin B."/>
            <person name="Cui S."/>
        </authorList>
    </citation>
    <scope>MUTAGENESIS OF GLU-1383</scope>
</reference>
<name>POLG_HE71</name>
<dbReference type="EC" id="3.4.22.29" evidence="1"/>
<dbReference type="EC" id="3.6.1.15" evidence="1"/>
<dbReference type="EC" id="3.4.22.28" evidence="11"/>
<dbReference type="EC" id="2.7.7.48" evidence="9"/>
<dbReference type="EMBL" id="FJ606450">
    <property type="protein sequence ID" value="ACM62759.1"/>
    <property type="molecule type" value="Genomic_RNA"/>
</dbReference>
<dbReference type="PDB" id="5GQ1">
    <property type="method" value="X-ray"/>
    <property type="resolution" value="2.49 A"/>
    <property type="chains" value="A/B/C/D/E/F=1227-1440"/>
</dbReference>
<dbReference type="PDB" id="5GRB">
    <property type="method" value="X-ray"/>
    <property type="resolution" value="2.80 A"/>
    <property type="chains" value="A/B/C/D/E/F=1227-1440"/>
</dbReference>
<dbReference type="PDB" id="8A5L">
    <property type="method" value="X-ray"/>
    <property type="resolution" value="1.62 A"/>
    <property type="chains" value="B=1434-1440"/>
</dbReference>
<dbReference type="PDBsum" id="5GQ1"/>
<dbReference type="PDBsum" id="5GRB"/>
<dbReference type="PDBsum" id="8A5L"/>
<dbReference type="SMR" id="B9VUU3"/>
<dbReference type="IntAct" id="B9VUU3">
    <property type="interactions" value="1"/>
</dbReference>
<dbReference type="MEROPS" id="C03.014"/>
<dbReference type="Proteomes" id="UP000149290">
    <property type="component" value="Genome"/>
</dbReference>
<dbReference type="GO" id="GO:0044162">
    <property type="term" value="C:host cell cytoplasmic vesicle membrane"/>
    <property type="evidence" value="ECO:0007669"/>
    <property type="project" value="UniProtKB-SubCell"/>
</dbReference>
<dbReference type="GO" id="GO:0042025">
    <property type="term" value="C:host cell nucleus"/>
    <property type="evidence" value="ECO:0007669"/>
    <property type="project" value="UniProtKB-SubCell"/>
</dbReference>
<dbReference type="GO" id="GO:0016020">
    <property type="term" value="C:membrane"/>
    <property type="evidence" value="ECO:0007669"/>
    <property type="project" value="UniProtKB-KW"/>
</dbReference>
<dbReference type="GO" id="GO:0039618">
    <property type="term" value="C:T=pseudo3 icosahedral viral capsid"/>
    <property type="evidence" value="ECO:0007669"/>
    <property type="project" value="UniProtKB-KW"/>
</dbReference>
<dbReference type="GO" id="GO:0005524">
    <property type="term" value="F:ATP binding"/>
    <property type="evidence" value="ECO:0007669"/>
    <property type="project" value="UniProtKB-KW"/>
</dbReference>
<dbReference type="GO" id="GO:0016887">
    <property type="term" value="F:ATP hydrolysis activity"/>
    <property type="evidence" value="ECO:0007669"/>
    <property type="project" value="InterPro"/>
</dbReference>
<dbReference type="GO" id="GO:0015267">
    <property type="term" value="F:channel activity"/>
    <property type="evidence" value="ECO:0007669"/>
    <property type="project" value="UniProtKB-KW"/>
</dbReference>
<dbReference type="GO" id="GO:0004197">
    <property type="term" value="F:cysteine-type endopeptidase activity"/>
    <property type="evidence" value="ECO:0007669"/>
    <property type="project" value="UniProtKB-EC"/>
</dbReference>
<dbReference type="GO" id="GO:0003723">
    <property type="term" value="F:RNA binding"/>
    <property type="evidence" value="ECO:0007669"/>
    <property type="project" value="UniProtKB-KW"/>
</dbReference>
<dbReference type="GO" id="GO:0003724">
    <property type="term" value="F:RNA helicase activity"/>
    <property type="evidence" value="ECO:0007669"/>
    <property type="project" value="InterPro"/>
</dbReference>
<dbReference type="GO" id="GO:0003968">
    <property type="term" value="F:RNA-directed RNA polymerase activity"/>
    <property type="evidence" value="ECO:0007669"/>
    <property type="project" value="UniProtKB-KW"/>
</dbReference>
<dbReference type="GO" id="GO:0005198">
    <property type="term" value="F:structural molecule activity"/>
    <property type="evidence" value="ECO:0007669"/>
    <property type="project" value="InterPro"/>
</dbReference>
<dbReference type="GO" id="GO:0008270">
    <property type="term" value="F:zinc ion binding"/>
    <property type="evidence" value="ECO:0007669"/>
    <property type="project" value="UniProtKB-KW"/>
</dbReference>
<dbReference type="GO" id="GO:0075512">
    <property type="term" value="P:clathrin-dependent endocytosis of virus by host cell"/>
    <property type="evidence" value="ECO:0007669"/>
    <property type="project" value="UniProtKB-KW"/>
</dbReference>
<dbReference type="GO" id="GO:0006260">
    <property type="term" value="P:DNA replication"/>
    <property type="evidence" value="ECO:0007669"/>
    <property type="project" value="UniProtKB-KW"/>
</dbReference>
<dbReference type="GO" id="GO:0006351">
    <property type="term" value="P:DNA-templated transcription"/>
    <property type="evidence" value="ECO:0007669"/>
    <property type="project" value="InterPro"/>
</dbReference>
<dbReference type="GO" id="GO:0034220">
    <property type="term" value="P:monoatomic ion transmembrane transport"/>
    <property type="evidence" value="ECO:0007669"/>
    <property type="project" value="UniProtKB-KW"/>
</dbReference>
<dbReference type="GO" id="GO:0006508">
    <property type="term" value="P:proteolysis"/>
    <property type="evidence" value="ECO:0007669"/>
    <property type="project" value="UniProtKB-KW"/>
</dbReference>
<dbReference type="GO" id="GO:0044694">
    <property type="term" value="P:symbiont genome entry into host cell via pore formation in plasma membrane"/>
    <property type="evidence" value="ECO:0007669"/>
    <property type="project" value="UniProtKB-KW"/>
</dbReference>
<dbReference type="GO" id="GO:0039520">
    <property type="term" value="P:symbiont-mediated activation of host autophagy"/>
    <property type="evidence" value="ECO:0007669"/>
    <property type="project" value="UniProtKB-KW"/>
</dbReference>
<dbReference type="GO" id="GO:0039545">
    <property type="term" value="P:symbiont-mediated suppression of host cytoplasmic pattern recognition receptor signaling pathway via inhibition of MAVS activity"/>
    <property type="evidence" value="ECO:0007669"/>
    <property type="project" value="UniProtKB-KW"/>
</dbReference>
<dbReference type="GO" id="GO:0039554">
    <property type="term" value="P:symbiont-mediated suppression of host cytoplasmic pattern recognition receptor signaling pathway via inhibition of MDA-5 activity"/>
    <property type="evidence" value="ECO:0007669"/>
    <property type="project" value="UniProtKB-KW"/>
</dbReference>
<dbReference type="GO" id="GO:0039540">
    <property type="term" value="P:symbiont-mediated suppression of host cytoplasmic pattern recognition receptor signaling pathway via inhibition of RIG-I activity"/>
    <property type="evidence" value="ECO:0007669"/>
    <property type="project" value="UniProtKB-KW"/>
</dbReference>
<dbReference type="GO" id="GO:0039522">
    <property type="term" value="P:symbiont-mediated suppression of host mRNA export from nucleus"/>
    <property type="evidence" value="ECO:0007669"/>
    <property type="project" value="UniProtKB-KW"/>
</dbReference>
<dbReference type="GO" id="GO:0039694">
    <property type="term" value="P:viral RNA genome replication"/>
    <property type="evidence" value="ECO:0007669"/>
    <property type="project" value="InterPro"/>
</dbReference>
<dbReference type="GO" id="GO:0019062">
    <property type="term" value="P:virion attachment to host cell"/>
    <property type="evidence" value="ECO:0007669"/>
    <property type="project" value="UniProtKB-KW"/>
</dbReference>
<dbReference type="CDD" id="cd23213">
    <property type="entry name" value="Enterovirus_RdRp"/>
    <property type="match status" value="1"/>
</dbReference>
<dbReference type="CDD" id="cd00205">
    <property type="entry name" value="rhv_like"/>
    <property type="match status" value="3"/>
</dbReference>
<dbReference type="FunFam" id="1.20.960.20:FF:000001">
    <property type="entry name" value="Genome polyprotein"/>
    <property type="match status" value="1"/>
</dbReference>
<dbReference type="FunFam" id="2.40.10.10:FF:000018">
    <property type="entry name" value="Genome polyprotein"/>
    <property type="match status" value="1"/>
</dbReference>
<dbReference type="FunFam" id="2.40.10.10:FF:000020">
    <property type="entry name" value="Genome polyprotein"/>
    <property type="match status" value="1"/>
</dbReference>
<dbReference type="FunFam" id="2.40.10.10:FF:000022">
    <property type="entry name" value="Genome polyprotein"/>
    <property type="match status" value="1"/>
</dbReference>
<dbReference type="FunFam" id="2.60.120.20:FF:000001">
    <property type="entry name" value="Genome polyprotein"/>
    <property type="match status" value="1"/>
</dbReference>
<dbReference type="FunFam" id="2.60.120.20:FF:000002">
    <property type="entry name" value="Genome polyprotein"/>
    <property type="match status" value="1"/>
</dbReference>
<dbReference type="FunFam" id="2.60.120.20:FF:000003">
    <property type="entry name" value="Genome polyprotein"/>
    <property type="match status" value="1"/>
</dbReference>
<dbReference type="FunFam" id="3.30.70.270:FF:000008">
    <property type="entry name" value="Genome polyprotein"/>
    <property type="match status" value="1"/>
</dbReference>
<dbReference type="FunFam" id="4.10.880.10:FF:000001">
    <property type="entry name" value="Genome polyprotein"/>
    <property type="match status" value="1"/>
</dbReference>
<dbReference type="FunFam" id="4.10.880.10:FF:000002">
    <property type="entry name" value="Genome polyprotein"/>
    <property type="match status" value="1"/>
</dbReference>
<dbReference type="Gene3D" id="1.20.960.20">
    <property type="match status" value="1"/>
</dbReference>
<dbReference type="Gene3D" id="2.60.120.20">
    <property type="match status" value="3"/>
</dbReference>
<dbReference type="Gene3D" id="3.30.70.270">
    <property type="match status" value="1"/>
</dbReference>
<dbReference type="Gene3D" id="6.10.20.20">
    <property type="entry name" value="Poliovirus 3A protein-like"/>
    <property type="match status" value="1"/>
</dbReference>
<dbReference type="Gene3D" id="4.10.880.10">
    <property type="entry name" value="Poliovirus 3D polymerase Domain 1 (Nucleotidyltransferase)"/>
    <property type="match status" value="2"/>
</dbReference>
<dbReference type="Gene3D" id="2.40.10.10">
    <property type="entry name" value="Trypsin-like serine proteases"/>
    <property type="match status" value="4"/>
</dbReference>
<dbReference type="InterPro" id="IPR003593">
    <property type="entry name" value="AAA+_ATPase"/>
</dbReference>
<dbReference type="InterPro" id="IPR043502">
    <property type="entry name" value="DNA/RNA_pol_sf"/>
</dbReference>
<dbReference type="InterPro" id="IPR000605">
    <property type="entry name" value="Helicase_SF3_ssDNA/RNA_vir"/>
</dbReference>
<dbReference type="InterPro" id="IPR014759">
    <property type="entry name" value="Helicase_SF3_ssRNA_vir"/>
</dbReference>
<dbReference type="InterPro" id="IPR027417">
    <property type="entry name" value="P-loop_NTPase"/>
</dbReference>
<dbReference type="InterPro" id="IPR014838">
    <property type="entry name" value="P3A"/>
</dbReference>
<dbReference type="InterPro" id="IPR036203">
    <property type="entry name" value="P3A_soluble_dom"/>
</dbReference>
<dbReference type="InterPro" id="IPR044067">
    <property type="entry name" value="PCV_3C_PRO"/>
</dbReference>
<dbReference type="InterPro" id="IPR000081">
    <property type="entry name" value="Peptidase_C3"/>
</dbReference>
<dbReference type="InterPro" id="IPR000199">
    <property type="entry name" value="Peptidase_C3A/C3B_picornavir"/>
</dbReference>
<dbReference type="InterPro" id="IPR009003">
    <property type="entry name" value="Peptidase_S1_PA"/>
</dbReference>
<dbReference type="InterPro" id="IPR043504">
    <property type="entry name" value="Peptidase_S1_PA_chymotrypsin"/>
</dbReference>
<dbReference type="InterPro" id="IPR003138">
    <property type="entry name" value="Pico_P1A"/>
</dbReference>
<dbReference type="InterPro" id="IPR002527">
    <property type="entry name" value="Pico_P2B"/>
</dbReference>
<dbReference type="InterPro" id="IPR001676">
    <property type="entry name" value="Picornavirus_capsid"/>
</dbReference>
<dbReference type="InterPro" id="IPR043128">
    <property type="entry name" value="Rev_trsase/Diguanyl_cyclase"/>
</dbReference>
<dbReference type="InterPro" id="IPR033703">
    <property type="entry name" value="Rhv-like"/>
</dbReference>
<dbReference type="InterPro" id="IPR001205">
    <property type="entry name" value="RNA-dir_pol_C"/>
</dbReference>
<dbReference type="InterPro" id="IPR007094">
    <property type="entry name" value="RNA-dir_pol_PSvirus"/>
</dbReference>
<dbReference type="InterPro" id="IPR029053">
    <property type="entry name" value="Viral_coat"/>
</dbReference>
<dbReference type="Pfam" id="PF08727">
    <property type="entry name" value="P3A"/>
    <property type="match status" value="1"/>
</dbReference>
<dbReference type="Pfam" id="PF00548">
    <property type="entry name" value="Peptidase_C3"/>
    <property type="match status" value="1"/>
</dbReference>
<dbReference type="Pfam" id="PF02226">
    <property type="entry name" value="Pico_P1A"/>
    <property type="match status" value="1"/>
</dbReference>
<dbReference type="Pfam" id="PF00947">
    <property type="entry name" value="Pico_P2A"/>
    <property type="match status" value="1"/>
</dbReference>
<dbReference type="Pfam" id="PF01552">
    <property type="entry name" value="Pico_P2B"/>
    <property type="match status" value="1"/>
</dbReference>
<dbReference type="Pfam" id="PF00680">
    <property type="entry name" value="RdRP_1"/>
    <property type="match status" value="1"/>
</dbReference>
<dbReference type="Pfam" id="PF00073">
    <property type="entry name" value="Rhv"/>
    <property type="match status" value="2"/>
</dbReference>
<dbReference type="Pfam" id="PF22663">
    <property type="entry name" value="Rhv_5"/>
    <property type="match status" value="1"/>
</dbReference>
<dbReference type="Pfam" id="PF00910">
    <property type="entry name" value="RNA_helicase"/>
    <property type="match status" value="1"/>
</dbReference>
<dbReference type="SMART" id="SM00382">
    <property type="entry name" value="AAA"/>
    <property type="match status" value="1"/>
</dbReference>
<dbReference type="SUPFAM" id="SSF56672">
    <property type="entry name" value="DNA/RNA polymerases"/>
    <property type="match status" value="1"/>
</dbReference>
<dbReference type="SUPFAM" id="SSF52540">
    <property type="entry name" value="P-loop containing nucleoside triphosphate hydrolases"/>
    <property type="match status" value="1"/>
</dbReference>
<dbReference type="SUPFAM" id="SSF88633">
    <property type="entry name" value="Positive stranded ssRNA viruses"/>
    <property type="match status" value="2"/>
</dbReference>
<dbReference type="SUPFAM" id="SSF89043">
    <property type="entry name" value="Soluble domain of poliovirus core protein 3a"/>
    <property type="match status" value="1"/>
</dbReference>
<dbReference type="SUPFAM" id="SSF50494">
    <property type="entry name" value="Trypsin-like serine proteases"/>
    <property type="match status" value="2"/>
</dbReference>
<dbReference type="PROSITE" id="PS51874">
    <property type="entry name" value="PCV_3C_PRO"/>
    <property type="match status" value="1"/>
</dbReference>
<dbReference type="PROSITE" id="PS50507">
    <property type="entry name" value="RDRP_SSRNA_POS"/>
    <property type="match status" value="1"/>
</dbReference>
<dbReference type="PROSITE" id="PS51218">
    <property type="entry name" value="SF3_HELICASE_2"/>
    <property type="match status" value="1"/>
</dbReference>
<sequence>MGSQVSTQRSGSHENSNSATEGSTINYTTINYYKDSYAATAGKQSLKQDPDKFANPVKDIFTEMAAPLKSPSAEACGYSDRVAQLTIGNSTITTQEAANIIVGYGEWPSYCSDSDATAVDKPTRPDVSVNRFYTLDTKLWEKSSKGWYWKFPDVLTETGVFGQNAQFHYLYRSGFCIHVQCNASKFHQGALLVAVLPEYVIGTVAGGTGTEDSHPPYKQTQPGADGFELQHPYVLDAGIPISQLTVCPHQWINLRTNNCATIIVPYINALPFDSALNHCNFGLLVVPISPLDYDQGATPVIPITITLAPMCSEFAGLRQAVTQGFPTELKPGTNQFLTTDDGVSAPILPNFHPTPCIHIPGEVRNLLELCQVETILEVNNVPTNATSLMERLRFPVSAQAGKGELCAVFRADPGRNGPWQSTLLGQLCGYYTQWSGSLEVTFMFTGSFMATGKMLIAYTPPGGPLPKDRATAMLGTHVIWDFGLQSSVTLVIPWISNTHYRAHARDGVFDYYTTGLVSIWYQTNYVVPIGAPNTAYIIALAAAQKNFTMKLCKDASDILQTGTIQGDRVADVIESSIGDSVSRALTQALPAPTGQNTQVSSHRLDTGKVPALQAAEIGASSNASDESMIETRCVLNSHSTAETTLDSFFSRAGLVGEIDLPLEGTTNPNGYANWDIDITGYAQMRRKVELFTYMRFDAEFTFVACTPTGEVVPQLLQYMFVPPGAPKPDSRESLAWQTATNPSVFVKLSDPPAQVSVPFMSPASAYQWFYDGYPTFGEHKQEKDLEYGACPNNMMGTFSVRTVGTSKSKYPLVVRIYMRMKHVRAWIPRPMRNQNYLFKANPNYAGNSIKPTGTSRTAITTLGKFGQQSGAIYVGNFRVVNRHLATHNDWANLVWEDSSRDLLVSSTTAQGCDTIARCNCQTGVYYCNSRRKHYPVSFSKPSLIYVEASEYYPARYQSHLMLAQGHSEPGDCGGILRCQHGVVGIVSTGGNGLVGFADVRDLLWLDEEAMEQGVSDYIKGLGDAFGTGFTDAVSREVEALKSYLIGSEGAVEKILKNLIKLISALVIVIRSDYDMVTLTATLALIGCHGSPWAWIKAKTASILGIPIAQKQSASWLKKFNDMANAAKGLEWVSNKISKFIDWLKEKIVPAAKEKVEFLNNLKQLPLLENQISNLEQSAASQEDLEVMFGNVSYLAHFCRKFQPLYATEAKRVYALEKRMNNYMQFKSKHRIEPVCLIIRGSPGTGKSLATGIIARAIADKYHSSVYSLPPDPDHFDGYKQQVVTVMDDLCQNPDGKDMSLFCQMVSTVDFIPPMASLEEKGVSFTSKFVIASTNATNIIVPTVSDSDAIRRRFYMDCDIEVTDSYKTDLGRLDAGRAAKLCSENNTANFKRCSPLVCGKAIQLRDRKSKVRYSVDTVVSELIREYSNRSAIGNTIEALFQGPPKFRPIRIGLEEKPAPDAISDLLASVDSEEVRQYCRDQGWIIPETPTNVERHLNRAVLVMQSIATVVAVVSLVYVIYKLFAGFQGAYSGAPKQVLKKPALRTATVQGPSLDFALSLLRRNVRQVQTDQGHFTMLGVRDRLAVLPRHSQPGKTIWIEHKLVNVLDAVELVDEQGVNLELTLITLDTNEKFRDITKFIPENISTASDATLVINTEHMPSMFVPVGDVVQYGFLNLSGKPTHRTMMYNFPTKAGQCGGVVTSVGKVIGIHIGGNGRQGFCAGLKRSYFASEQGEIQWVKPNKETGRLNINGPTRTKLEPSVFHDVFEGSKEPAVLHSKDPRLEVDFEQALFSKYVGNTLHVPDEYIREAALHYANQLKQLDIDTTQMSMEEACYGTDNLEAIDLHTSAGYPYSALGIKKRDILDPTTRDVSKMKFYMDKYGLDLPYSTYVKDELRSIDKIKKGKSRLIEASSLNDSVYLRMAFGHLYETFHANPGTVTGSAVGCNPDVFWSKLPILLPGSLFAFDYSGYDASLSPVWFRALELVLREIGYSEEAVSLIEGINHTHHVYRNKTYCVLGGMPSGCSGTSIFNTMINNIIIRALLIKTFKGIDLDELNMVAYGDDVLASYPFPIDCLELAKTGKEYGLTMTPADKSPCFNEVNWENATFLKRGFLPDEQFPFLIHPTMPMKEIHESIRWTKDARNTQDHVRSLCLLAWHNGKQEYEKFVSSIRSVPIGKALAIPNYENLRRNWLELF</sequence>
<comment type="function">
    <molecule>Capsid protein VP1</molecule>
    <text evidence="1 6">Forms an icosahedral capsid of pseudo T=3 symmetry with capsid proteins VP2 and VP3 (By similarity). The capsid is 300 Angstroms in diameter, composed of 60 copies of each capsid protein and enclosing the viral positive strand RNA genome (By similarity). Capsid protein VP1 mainly forms the vertices of the capsid (By similarity). Capsid protein VP1, together with VP2, interacts with host cell receptor SCARB2 to provide virion attachment to target host cells (By similarity). This attachment induces virion internalization. This attachment induces virion internalization (By similarity). After binding to its receptor, the capsid undergoes conformational changes (By similarity). Capsid protein VP1 N-terminus (that contains an amphipathic alpha-helix) and capsid protein VP4 are externalized (By similarity). Together, they shape a pore in the host membrane through which viral genome is translocated to host cell cytoplasm (By similarity).</text>
</comment>
<comment type="function">
    <molecule>Capsid protein VP2</molecule>
    <text evidence="1 6">Forms an icosahedral capsid of pseudo T=3 symmetry with capsid proteins VP2 and VP3 (By similarity). The capsid is 300 Angstroms in diameter, composed of 60 copies of each capsid protein and enclosing the viral positive strand RNA genome (By similarity). Capsid protein VP2, together with VP1, interacts with host cell receptor SCARB2 to provide virion attachment to target host cells (By similarity).</text>
</comment>
<comment type="function">
    <molecule>Capsid protein VP3</molecule>
    <text evidence="1">Forms an icosahedral capsid of pseudo T=3 symmetry with capsid proteins VP2 and VP3 (By similarity). The capsid is 300 Angstroms in diameter, composed of 60 copies of each capsid protein and enclosing the viral positive strand RNA genome (By similarity).</text>
</comment>
<comment type="function">
    <molecule>Capsid protein VP4</molecule>
    <text evidence="1">Lies on the inner surface of the capsid shell (By similarity). After binding to the host receptor, the capsid undergoes conformational changes (By similarity). Capsid protein VP4 is released, Capsid protein VP1 N-terminus is externalized, and together, they shape a pore in the host membrane through which the viral genome is translocated into the host cell cytoplasm (By similarity).</text>
</comment>
<comment type="function">
    <molecule>Capsid protein VP0</molecule>
    <text evidence="1">Component of immature procapsids, which is cleaved into capsid proteins VP4 and VP2 after maturation (By similarity). Allows the capsid to remain inactive before the maturation step (By similarity).</text>
</comment>
<comment type="function">
    <molecule>Protease 2A</molecule>
    <text evidence="1 5">Cysteine protease that cleaves viral polyprotein and specific host proteins (By similarity). It is responsible for the autocatalytic cleavage between the P1 and P2 regions, which is the first cleavage occurring in the polyprotein (By similarity). Also cleaves the host translation initiation factor EIF4G1, in order to shut down the capped cellular mRNA translation (By similarity). Inhibits the host nucleus-cytoplasm protein and RNA trafficking by cleaving host members of the nuclear pores (By similarity). Counteracts stress granule formation probably by antagonizing its assembly or promoting its dissassembly (By similarity). Cleaves and inhibits host IFIH1/MDA5, thereby inhibiting the type-I IFN production and the establishment of the antiviral state (By similarity). Cleaves and inhibits host MAVS, thereby inhibiting the type-I IFN production and the establishment of the antiviral state (By similarity).</text>
</comment>
<comment type="function">
    <molecule>Protein 2B</molecule>
    <text evidence="1 5">Plays an essential role in the virus replication cycle by acting as a viroporin. Creates a pore in the host endoplasmic reticulum and as a consequence releases Ca2+ in the cytoplasm of infected cell (By similarity). In turn, high levels of cytoplasmic calcium may trigger membrane trafficking and transport of viral ER-associated proteins to viroplasms, sites of viral genome replication (By similarity). Also activates the mitochondrial apoptotic pathway by activating host BAX (By similarity).</text>
</comment>
<comment type="function">
    <molecule>Protein 2C</molecule>
    <text evidence="1">Induces and associates with structural rearrangements of intracellular membranes. Displays RNA-binding, nucleotide binding and NTPase activities. May play a role in virion morphogenesis and viral RNA encapsidation by interacting with the capsid protein VP3.</text>
</comment>
<comment type="function">
    <molecule>Protein 3AB</molecule>
    <text evidence="1">Localizes the viral replication complex to the surface of membranous vesicles. Together with protein 3CD binds the Cis-Active RNA Element (CRE) which is involved in RNA synthesis initiation. Acts as a cofactor to stimulate the activity of 3D polymerase, maybe through a nucleid acid chaperone activity.</text>
</comment>
<comment type="function">
    <molecule>Protein 3A</molecule>
    <text evidence="1">Localizes the viral replication complex to the surface of membranous vesicles (By similarity). It inhibits host cell endoplasmic reticulum-to-Golgi apparatus transport and causes the disassembly of the Golgi complex, possibly through GBF1 interaction (By similarity). This would result in depletion of MHC, trail receptors and IFN receptors at the host cell surface (By similarity). Plays an essential role in viral RNA replication by recruiting ACBD3 and PI4KB at the viral replication sites, thereby allowing the formation of the rearranged membranous structures where viral replication takes place (By similarity).</text>
</comment>
<comment type="function">
    <molecule>Viral protein genome-linked</molecule>
    <text evidence="1">Acts as a primer for viral RNA replication and remains covalently bound to viral genomic RNA. VPg is uridylylated prior to priming replication into VPg-pUpU. The oriI viral genomic sequence may act as a template for this. The VPg-pUpU is then used as primer on the genomic RNA poly(A) by the RNA-dependent RNA polymerase to replicate the viral genome. During genome replication, the VPg-RNA linkage is removed by the host TDP2, thereby accelerating replication. During the late stage of the replication cycle, host TDP2 is excluded from sites of viral RNA synthesis and encapsidation, allowing for the generation of progeny virions.</text>
</comment>
<comment type="function">
    <molecule>Protein 3CD</molecule>
    <text evidence="1">Involved in the viral replication complex and viral polypeptide maturation. It exhibits protease activity with a specificity and catalytic efficiency that is different from protease 3C. Protein 3CD lacks polymerase activity. Protein 3CD binds to the 5'UTR of the viral genome.</text>
</comment>
<comment type="function">
    <molecule>Protease 3C</molecule>
    <text evidence="1 3 5">Major viral protease that mediates proteolytic processing of the polyprotein (By similarity). Cleaves host EIF5B, contributing to host translation shutoff (By similarity). Also cleaves host PABPC1, contributing to host translation shutoff (By similarity). Disassembles host cytoplasmic stress granules by cleaving host G3BP1, although this effect is less prononced than the inhibition induced by protease 2A (By similarity). Cleaves host RIGI and thus contributes to the inhibition of type I interferon production (By similarity). Cleaves host IRF7 and thus contributes to the inhibition of type I interferon production (By similarity). Cleaves host HNRNPA1 thereby increasing the translation of apoptosis protease activating factor APAF1, leading to apoptosis of the host cell (By similarity). Cleaves host NLRP1, triggers host N-glycine-mediated degradation of the autoinhibitory NLRP1 N-terminal fragment (By similarity).</text>
</comment>
<comment type="function">
    <molecule>RNA-directed RNA polymerase</molecule>
    <text evidence="1">Replicates the viral genomic RNA on the surface of intracellular membranes. May form linear arrays of subunits that propagate along a strong head-to-tail interaction called interface-I. Covalently attaches UMP to a tyrosine of VPg, which is used to prime RNA synthesis. The positive stranded RNA genome is first replicated at virus induced membranous vesicles, creating a dsRNA genomic replication form. This dsRNA is then used as template to synthesize positive stranded RNA genomes. ss(+)RNA genomes are either translated, replicated or encapsidated.</text>
</comment>
<comment type="catalytic activity">
    <molecule>Protein 2C</molecule>
    <reaction evidence="1">
        <text>a ribonucleoside 5'-triphosphate + H2O = a ribonucleoside 5'-diphosphate + phosphate + H(+)</text>
        <dbReference type="Rhea" id="RHEA:23680"/>
        <dbReference type="ChEBI" id="CHEBI:15377"/>
        <dbReference type="ChEBI" id="CHEBI:15378"/>
        <dbReference type="ChEBI" id="CHEBI:43474"/>
        <dbReference type="ChEBI" id="CHEBI:57930"/>
        <dbReference type="ChEBI" id="CHEBI:61557"/>
        <dbReference type="EC" id="3.6.1.15"/>
    </reaction>
</comment>
<comment type="catalytic activity">
    <molecule>Protease 2A</molecule>
    <reaction evidence="1">
        <text>Selective cleavage of Tyr-|-Gly bond in the picornavirus polyprotein.</text>
        <dbReference type="EC" id="3.4.22.29"/>
    </reaction>
</comment>
<comment type="catalytic activity">
    <molecule>RNA-directed RNA polymerase</molecule>
    <reaction evidence="9">
        <text>RNA(n) + a ribonucleoside 5'-triphosphate = RNA(n+1) + diphosphate</text>
        <dbReference type="Rhea" id="RHEA:21248"/>
        <dbReference type="Rhea" id="RHEA-COMP:14527"/>
        <dbReference type="Rhea" id="RHEA-COMP:17342"/>
        <dbReference type="ChEBI" id="CHEBI:33019"/>
        <dbReference type="ChEBI" id="CHEBI:61557"/>
        <dbReference type="ChEBI" id="CHEBI:140395"/>
        <dbReference type="EC" id="2.7.7.48"/>
    </reaction>
</comment>
<comment type="catalytic activity">
    <molecule>Protease 3C</molecule>
    <reaction evidence="11">
        <text>Selective cleavage of Gln-|-Gly bond in the poliovirus polyprotein. In other picornavirus reactions Glu may be substituted for Gln, and Ser or Thr for Gly.</text>
        <dbReference type="EC" id="3.4.22.28"/>
    </reaction>
</comment>
<comment type="cofactor">
    <molecule>RNA-directed RNA polymerase</molecule>
    <cofactor evidence="1">
        <name>Mg(2+)</name>
        <dbReference type="ChEBI" id="CHEBI:18420"/>
    </cofactor>
    <text evidence="1 4">Binds 2 magnesium ions that constitute a dinuclear catalytic metal center (By similarity). The magnesium ions are not prebound but only present for catalysis (By similarity). Requires the presence of 3CDpro or 3CPro (By similarity).</text>
</comment>
<comment type="activity regulation">
    <molecule>RNA-directed RNA polymerase</molecule>
    <text evidence="1">Replication or transcription is subject to high level of random mutations by the nucleotide analog ribavirin.</text>
</comment>
<comment type="subunit">
    <molecule>Capsid protein VP0</molecule>
    <text evidence="1">Interacts with capsid protein VP1 and capsid protein VP3 to form heterotrimeric protomers.</text>
</comment>
<comment type="subunit">
    <molecule>Capsid protein VP1</molecule>
    <text evidence="1 6">Interacts with capsid protein VP0, and capsid protein VP3 to form heterotrimeric protomers (By similarity). Five protomers subsequently associate to form pentamers which serve as building blocks for the capsid (By similarity). Interacts with capsid protein VP2, capsid protein VP3 and capsid protein VP4 following cleavage of capsid protein VP0 (By similarity). Interacts with host SCARB2 (By similarity). Interacts with host ARF6; this interaction mediates viral endocytosis (By similarity).</text>
</comment>
<comment type="subunit">
    <molecule>Capsid protein VP2</molecule>
    <text evidence="1 6">Interacts with capsid protein VP1 and capsid protein VP3 in the mature capsid (By similarity). Interacts with host SCARB2 (By similarity).</text>
</comment>
<comment type="subunit">
    <molecule>Capsid protein VP3</molecule>
    <text evidence="1">Interacts with capsid protein VP0 and capsid protein VP1 to form heterotrimeric protomers (By similarity). Five protomers subsequently associate to form pentamers which serve as building blocks for the capsid (By similarity). Interacts with capsid protein VP4 in the mature capsid (By similarity). Interacts with protein 2C; this interaction may be important for virion morphogenesis (By similarity).</text>
</comment>
<comment type="subunit">
    <molecule>Capsid protein VP4</molecule>
    <text evidence="1">Interacts with capsid protein VP1 and capsid protein VP3.</text>
</comment>
<comment type="subunit">
    <molecule>Protease 2A</molecule>
    <text evidence="7">Homodimer.</text>
</comment>
<comment type="subunit">
    <molecule>Protein 2B</molecule>
    <text evidence="5">Interacts with host BAX; this interaction activates the mitochondrial apoptotic pathway. Interacts with host ILF2.</text>
</comment>
<comment type="subunit">
    <molecule>Protein 2C</molecule>
    <text evidence="1 5 16">Homohexamer; forms a hexameric ring structure with 6-fold symmetry characteristic of AAA+ ATPases (Probable). Interacts (via N-terminus) with host RTN3 (via reticulon domain); this interaction is important for viral replication (By similarity). Interacts with capsid protein VP3; this interaction may be important for virion morphogenesis (By similarity).</text>
</comment>
<comment type="subunit">
    <molecule>Protein 3AB</molecule>
    <text evidence="1">Interacts with protein 3CD.</text>
</comment>
<comment type="subunit">
    <molecule>Protein 3A</molecule>
    <text evidence="1 6">Homodimer (By similarity). Interacts with host GBF1 (By similarity). Interacts (via GOLD domain) with host ACBD3 (via GOLD domain); this interaction allows the formation of a viral protein 3A/ACBD3 heterotetramer with a 2:2 stoichiometry, which will stimulate the recruitment of host PI4KB in order to synthesize PI4P at the viral RNA replication sites (By similarity).</text>
</comment>
<comment type="subunit">
    <molecule>Viral protein genome-linked</molecule>
    <text evidence="1">Interacts with RNA-directed RNA polymerase.</text>
</comment>
<comment type="subunit">
    <molecule>Protease 3C</molecule>
    <text evidence="5 7">Interacts with host IFIH1/MDA5; this interaction inhibits host IFIH1 (By similarity). Interacts with host RIGI (By similarity).</text>
</comment>
<comment type="subunit">
    <molecule>Protein 3CD</molecule>
    <text evidence="1">Interacts with protein 3AB and with RNA-directed RNA polymerase.</text>
</comment>
<comment type="subunit">
    <molecule>RNA-directed RNA polymerase</molecule>
    <text evidence="1">Interacts with Viral protein genome-linked and with protein 3CD.</text>
</comment>
<comment type="subcellular location">
    <molecule>Capsid protein VP0</molecule>
    <subcellularLocation>
        <location>Virion</location>
    </subcellularLocation>
    <subcellularLocation>
        <location evidence="15">Host cytoplasm</location>
    </subcellularLocation>
</comment>
<comment type="subcellular location">
    <molecule>Capsid protein VP4</molecule>
    <subcellularLocation>
        <location>Virion</location>
    </subcellularLocation>
</comment>
<comment type="subcellular location">
    <molecule>Capsid protein VP2</molecule>
    <subcellularLocation>
        <location evidence="1">Virion</location>
    </subcellularLocation>
    <subcellularLocation>
        <location evidence="15">Host cytoplasm</location>
    </subcellularLocation>
</comment>
<comment type="subcellular location">
    <molecule>Capsid protein VP3</molecule>
    <subcellularLocation>
        <location evidence="1">Virion</location>
    </subcellularLocation>
    <subcellularLocation>
        <location evidence="15">Host cytoplasm</location>
    </subcellularLocation>
</comment>
<comment type="subcellular location">
    <molecule>Capsid protein VP1</molecule>
    <subcellularLocation>
        <location evidence="1">Virion</location>
    </subcellularLocation>
    <subcellularLocation>
        <location evidence="15">Host cytoplasm</location>
    </subcellularLocation>
</comment>
<comment type="subcellular location">
    <molecule>Protein 2B</molecule>
    <subcellularLocation>
        <location evidence="15">Host cytoplasmic vesicle membrane</location>
        <topology evidence="15">Peripheral membrane protein</topology>
        <orientation evidence="15">Cytoplasmic side</orientation>
    </subcellularLocation>
    <text>Probably localizes to the surface of intracellular membrane vesicles that are induced after virus infection as the site for viral RNA replication. These vesicles are derived from the endoplasmic reticulum.</text>
</comment>
<comment type="subcellular location">
    <molecule>Protein 2C</molecule>
    <subcellularLocation>
        <location evidence="15">Host cytoplasmic vesicle membrane</location>
        <topology evidence="15">Peripheral membrane protein</topology>
        <orientation evidence="15">Cytoplasmic side</orientation>
    </subcellularLocation>
    <text>Probably localizes to the surface of intracellular membrane vesicles that are induced after virus infection as the site for viral RNA replication. These vesicles are derived from the endoplasmic reticulum.</text>
</comment>
<comment type="subcellular location">
    <molecule>Protein 3A</molecule>
    <subcellularLocation>
        <location evidence="15">Host cytoplasmic vesicle membrane</location>
        <topology evidence="15">Peripheral membrane protein</topology>
        <orientation evidence="15">Cytoplasmic side</orientation>
    </subcellularLocation>
    <text>Probably localizes to the surface of intracellular membrane vesicles that are induced after virus infection as the site for viral RNA replication. These vesicles are derived from the endoplasmic reticulum.</text>
</comment>
<comment type="subcellular location">
    <molecule>Protein 3AB</molecule>
    <subcellularLocation>
        <location evidence="15">Host cytoplasmic vesicle membrane</location>
        <topology evidence="15">Peripheral membrane protein</topology>
        <orientation evidence="15">Cytoplasmic side</orientation>
    </subcellularLocation>
    <text>Probably localizes to the surface of intracellular membrane vesicles that are induced after virus infection as the site for viral RNA replication. These vesicles are derived from the endoplasmic reticulum.</text>
</comment>
<comment type="subcellular location">
    <molecule>Viral protein genome-linked</molecule>
    <subcellularLocation>
        <location evidence="1">Virion</location>
    </subcellularLocation>
    <subcellularLocation>
        <location evidence="5">Host cytoplasm</location>
    </subcellularLocation>
</comment>
<comment type="subcellular location">
    <molecule>Protease 3C</molecule>
    <subcellularLocation>
        <location>Host cytoplasm</location>
    </subcellularLocation>
</comment>
<comment type="subcellular location">
    <molecule>Protein 3CD</molecule>
    <subcellularLocation>
        <location evidence="1">Host nucleus</location>
    </subcellularLocation>
    <subcellularLocation>
        <location evidence="1">Host cytoplasm</location>
    </subcellularLocation>
    <subcellularLocation>
        <location evidence="15">Host cytoplasmic vesicle membrane</location>
        <topology evidence="15">Peripheral membrane protein</topology>
        <orientation evidence="15">Cytoplasmic side</orientation>
    </subcellularLocation>
    <text>Probably localizes to the surface of intracellular membrane vesicles that are induced after virus infection as the site for viral RNA replication. These vesicles are derived from the endoplasmic reticulum.</text>
</comment>
<comment type="subcellular location">
    <molecule>RNA-directed RNA polymerase</molecule>
    <subcellularLocation>
        <location evidence="15">Host cytoplasmic vesicle membrane</location>
        <topology evidence="15">Peripheral membrane protein</topology>
        <orientation evidence="15">Cytoplasmic side</orientation>
    </subcellularLocation>
    <text>Probably localizes to the surface of intracellular membrane vesicles that are induced after virus infection as the site for viral RNA replication. These vesicles are derived from the endoplasmic reticulum.</text>
</comment>
<comment type="domain">
    <molecule>Protein 2C</molecule>
    <text evidence="1 14">The N-terminus has membrane-binding (By similarity). The N-terminus also displays RNA-binding properties (By similarity). The N-terminus is involved in oligomerization (By similarity). The central part contains an ATPase domain and a degenerate C4-type zinc-finger with only 3 cysteines (Ref.2). The C-terminus is involved in RNA-binding (By similarity). The extreme C-terminus contains a region involved in oligomerization (By similarity).</text>
</comment>
<comment type="PTM">
    <molecule>Genome polyprotein</molecule>
    <text evidence="1">Specific enzymatic cleavages in vivo by the viral proteases yield processing intermediates and the mature proteins.</text>
</comment>
<comment type="PTM">
    <molecule>Capsid protein VP0</molecule>
    <text evidence="1">Myristoylation is required for the formation of pentamers during virus assembly. Further assembly of 12 pentamers and a molecule of genomic RNA generates the provirion.</text>
</comment>
<comment type="PTM">
    <molecule>Capsid protein VP0</molecule>
    <text evidence="1">During virion maturation, immature virions are rendered infectious following cleavage of VP0 into VP4 and VP2. This maturation seems to be an autocatalytic event triggered by the presence of RNA in the capsid and it is followed by a conformational change infectious virion.</text>
</comment>
<comment type="PTM">
    <molecule>Capsid protein VP4</molecule>
    <text evidence="1">Myristoylation is required during RNA encapsidation and formation of the mature virus particle.</text>
</comment>
<comment type="PTM">
    <molecule>Viral protein genome-linked</molecule>
    <text evidence="1">VPg is uridylylated by the polymerase into VPg-pUpU. This acts as a nucleotide-peptide primer for the genomic RNA replication.</text>
</comment>
<comment type="similarity">
    <text evidence="15">Belongs to the picornaviruses polyprotein family.</text>
</comment>
<accession>B9VUU3</accession>
<organism>
    <name type="scientific">Human enterovirus 71</name>
    <name type="common">EV71</name>
    <name type="synonym">EV-71</name>
    <dbReference type="NCBI Taxonomy" id="39054"/>
    <lineage>
        <taxon>Viruses</taxon>
        <taxon>Riboviria</taxon>
        <taxon>Orthornavirae</taxon>
        <taxon>Pisuviricota</taxon>
        <taxon>Pisoniviricetes</taxon>
        <taxon>Picornavirales</taxon>
        <taxon>Picornaviridae</taxon>
        <taxon>Ensavirinae</taxon>
        <taxon>Enterovirus</taxon>
        <taxon>Enterovirus A</taxon>
    </lineage>
</organism>
<keyword id="KW-0002">3D-structure</keyword>
<keyword id="KW-1072">Activation of host autophagy by virus</keyword>
<keyword id="KW-0067">ATP-binding</keyword>
<keyword id="KW-0068">Autocatalytic cleavage</keyword>
<keyword id="KW-0167">Capsid protein</keyword>
<keyword id="KW-1165">Clathrin-mediated endocytosis of virus by host</keyword>
<keyword id="KW-0191">Covalent protein-RNA linkage</keyword>
<keyword id="KW-0235">DNA replication</keyword>
<keyword id="KW-1262">Eukaryotic host gene expression shutoff by virus</keyword>
<keyword id="KW-1193">Eukaryotic host translation shutoff by virus</keyword>
<keyword id="KW-0347">Helicase</keyword>
<keyword id="KW-1035">Host cytoplasm</keyword>
<keyword id="KW-1036">Host cytoplasmic vesicle</keyword>
<keyword id="KW-1190">Host gene expression shutoff by virus</keyword>
<keyword id="KW-1043">Host membrane</keyword>
<keyword id="KW-1192">Host mRNA suppression by virus</keyword>
<keyword id="KW-1048">Host nucleus</keyword>
<keyword id="KW-0945">Host-virus interaction</keyword>
<keyword id="KW-0378">Hydrolase</keyword>
<keyword id="KW-1090">Inhibition of host innate immune response by virus</keyword>
<keyword id="KW-1097">Inhibition of host MAVS by virus</keyword>
<keyword id="KW-1089">Inhibition of host MDA5 by virus</keyword>
<keyword id="KW-1099">Inhibition of host mRNA nuclear export by virus</keyword>
<keyword id="KW-1088">Inhibition of host RIG-I by virus</keyword>
<keyword id="KW-1113">Inhibition of host RLR pathway by virus</keyword>
<keyword id="KW-0407">Ion channel</keyword>
<keyword id="KW-0406">Ion transport</keyword>
<keyword id="KW-0449">Lipoprotein</keyword>
<keyword id="KW-0460">Magnesium</keyword>
<keyword id="KW-0472">Membrane</keyword>
<keyword id="KW-0479">Metal-binding</keyword>
<keyword id="KW-0519">Myristate</keyword>
<keyword id="KW-0547">Nucleotide-binding</keyword>
<keyword id="KW-0548">Nucleotidyltransferase</keyword>
<keyword id="KW-0597">Phosphoprotein</keyword>
<keyword id="KW-1172">Pore-mediated penetration of viral genome into host cell</keyword>
<keyword id="KW-0645">Protease</keyword>
<keyword id="KW-0677">Repeat</keyword>
<keyword id="KW-0694">RNA-binding</keyword>
<keyword id="KW-0696">RNA-directed RNA polymerase</keyword>
<keyword id="KW-1143">T=pseudo3 icosahedral capsid protein</keyword>
<keyword id="KW-0788">Thiol protease</keyword>
<keyword id="KW-0808">Transferase</keyword>
<keyword id="KW-0813">Transport</keyword>
<keyword id="KW-1161">Viral attachment to host cell</keyword>
<keyword id="KW-0899">Viral immunoevasion</keyword>
<keyword id="KW-1182">Viral ion channel</keyword>
<keyword id="KW-1162">Viral penetration into host cytoplasm</keyword>
<keyword id="KW-0693">Viral RNA replication</keyword>
<keyword id="KW-0946">Virion</keyword>
<keyword id="KW-1164">Virus endocytosis by host</keyword>
<keyword id="KW-1160">Virus entry into host cell</keyword>
<keyword id="KW-0862">Zinc</keyword>
<keyword id="KW-0863">Zinc-finger</keyword>
<proteinExistence type="evidence at protein level"/>